<accession>Q8N6V9</accession>
<accession>B4DH73</accession>
<protein>
    <recommendedName>
        <fullName>Testis-expressed protein 9</fullName>
    </recommendedName>
</protein>
<dbReference type="EMBL" id="AK294960">
    <property type="protein sequence ID" value="BAG58034.1"/>
    <property type="molecule type" value="mRNA"/>
</dbReference>
<dbReference type="EMBL" id="AC068726">
    <property type="status" value="NOT_ANNOTATED_CDS"/>
    <property type="molecule type" value="Genomic_DNA"/>
</dbReference>
<dbReference type="EMBL" id="AC084782">
    <property type="status" value="NOT_ANNOTATED_CDS"/>
    <property type="molecule type" value="Genomic_DNA"/>
</dbReference>
<dbReference type="EMBL" id="CH471082">
    <property type="protein sequence ID" value="EAW77500.1"/>
    <property type="molecule type" value="Genomic_DNA"/>
</dbReference>
<dbReference type="EMBL" id="BC028119">
    <property type="protein sequence ID" value="AAH28119.1"/>
    <property type="molecule type" value="mRNA"/>
</dbReference>
<dbReference type="CCDS" id="CCDS10157.1">
    <molecule id="Q8N6V9-1"/>
</dbReference>
<dbReference type="CCDS" id="CCDS66776.1">
    <molecule id="Q8N6V9-2"/>
</dbReference>
<dbReference type="RefSeq" id="NP_001273378.1">
    <molecule id="Q8N6V9-2"/>
    <property type="nucleotide sequence ID" value="NM_001286449.2"/>
</dbReference>
<dbReference type="RefSeq" id="NP_001371969.1">
    <molecule id="Q8N6V9-2"/>
    <property type="nucleotide sequence ID" value="NM_001385040.1"/>
</dbReference>
<dbReference type="RefSeq" id="NP_001371970.1">
    <molecule id="Q8N6V9-2"/>
    <property type="nucleotide sequence ID" value="NM_001385041.1"/>
</dbReference>
<dbReference type="RefSeq" id="NP_001371971.1">
    <molecule id="Q8N6V9-2"/>
    <property type="nucleotide sequence ID" value="NM_001385042.1"/>
</dbReference>
<dbReference type="RefSeq" id="NP_001371972.1">
    <molecule id="Q8N6V9-2"/>
    <property type="nucleotide sequence ID" value="NM_001385043.1"/>
</dbReference>
<dbReference type="RefSeq" id="NP_001371973.1">
    <molecule id="Q8N6V9-2"/>
    <property type="nucleotide sequence ID" value="NM_001385044.1"/>
</dbReference>
<dbReference type="RefSeq" id="NP_001371974.1">
    <molecule id="Q8N6V9-2"/>
    <property type="nucleotide sequence ID" value="NM_001385045.1"/>
</dbReference>
<dbReference type="RefSeq" id="NP_001382425.1">
    <molecule id="Q8N6V9-1"/>
    <property type="nucleotide sequence ID" value="NM_001395496.1"/>
</dbReference>
<dbReference type="RefSeq" id="NP_940926.1">
    <molecule id="Q8N6V9-1"/>
    <property type="nucleotide sequence ID" value="NM_198524.3"/>
</dbReference>
<dbReference type="RefSeq" id="XP_005254416.1">
    <molecule id="Q8N6V9-1"/>
    <property type="nucleotide sequence ID" value="XM_005254359.6"/>
</dbReference>
<dbReference type="RefSeq" id="XP_005254418.1">
    <property type="nucleotide sequence ID" value="XM_005254361.3"/>
</dbReference>
<dbReference type="RefSeq" id="XP_011519832.1">
    <molecule id="Q8N6V9-1"/>
    <property type="nucleotide sequence ID" value="XM_011521530.4"/>
</dbReference>
<dbReference type="RefSeq" id="XP_016877649.1">
    <property type="nucleotide sequence ID" value="XM_017022160.1"/>
</dbReference>
<dbReference type="RefSeq" id="XP_016877652.1">
    <property type="nucleotide sequence ID" value="XM_017022163.1"/>
</dbReference>
<dbReference type="RefSeq" id="XP_016877653.1">
    <property type="nucleotide sequence ID" value="XM_017022164.1"/>
</dbReference>
<dbReference type="RefSeq" id="XP_047288422.1">
    <molecule id="Q8N6V9-1"/>
    <property type="nucleotide sequence ID" value="XM_047432466.1"/>
</dbReference>
<dbReference type="RefSeq" id="XP_047288425.1">
    <molecule id="Q8N6V9-2"/>
    <property type="nucleotide sequence ID" value="XM_047432469.1"/>
</dbReference>
<dbReference type="RefSeq" id="XP_054233839.1">
    <molecule id="Q8N6V9-1"/>
    <property type="nucleotide sequence ID" value="XM_054377864.1"/>
</dbReference>
<dbReference type="RefSeq" id="XP_054233840.1">
    <molecule id="Q8N6V9-1"/>
    <property type="nucleotide sequence ID" value="XM_054377865.1"/>
</dbReference>
<dbReference type="RefSeq" id="XP_054233841.1">
    <molecule id="Q8N6V9-1"/>
    <property type="nucleotide sequence ID" value="XM_054377866.1"/>
</dbReference>
<dbReference type="SMR" id="Q8N6V9"/>
<dbReference type="BioGRID" id="131910">
    <property type="interactions" value="40"/>
</dbReference>
<dbReference type="FunCoup" id="Q8N6V9">
    <property type="interactions" value="81"/>
</dbReference>
<dbReference type="IntAct" id="Q8N6V9">
    <property type="interactions" value="19"/>
</dbReference>
<dbReference type="MINT" id="Q8N6V9"/>
<dbReference type="STRING" id="9606.ENSP00000342169"/>
<dbReference type="GlyGen" id="Q8N6V9">
    <property type="glycosylation" value="1 site"/>
</dbReference>
<dbReference type="iPTMnet" id="Q8N6V9"/>
<dbReference type="PhosphoSitePlus" id="Q8N6V9"/>
<dbReference type="BioMuta" id="TEX9"/>
<dbReference type="DMDM" id="74729187"/>
<dbReference type="jPOST" id="Q8N6V9"/>
<dbReference type="MassIVE" id="Q8N6V9"/>
<dbReference type="PaxDb" id="9606-ENSP00000342169"/>
<dbReference type="PeptideAtlas" id="Q8N6V9"/>
<dbReference type="ProteomicsDB" id="4201"/>
<dbReference type="ProteomicsDB" id="72242">
    <molecule id="Q8N6V9-1"/>
</dbReference>
<dbReference type="Antibodypedia" id="42704">
    <property type="antibodies" value="88 antibodies from 18 providers"/>
</dbReference>
<dbReference type="DNASU" id="374618"/>
<dbReference type="Ensembl" id="ENST00000352903.6">
    <molecule id="Q8N6V9-1"/>
    <property type="protein sequence ID" value="ENSP00000342169.2"/>
    <property type="gene ID" value="ENSG00000151575.15"/>
</dbReference>
<dbReference type="Ensembl" id="ENST00000560827.6">
    <molecule id="Q8N6V9-2"/>
    <property type="protein sequence ID" value="ENSP00000452791.2"/>
    <property type="gene ID" value="ENSG00000151575.15"/>
</dbReference>
<dbReference type="Ensembl" id="ENST00000696102.1">
    <molecule id="Q8N6V9-1"/>
    <property type="protein sequence ID" value="ENSP00000512397.1"/>
    <property type="gene ID" value="ENSG00000151575.15"/>
</dbReference>
<dbReference type="GeneID" id="374618"/>
<dbReference type="KEGG" id="hsa:374618"/>
<dbReference type="MANE-Select" id="ENST00000696102.1">
    <property type="protein sequence ID" value="ENSP00000512397.1"/>
    <property type="RefSeq nucleotide sequence ID" value="NM_001395496.1"/>
    <property type="RefSeq protein sequence ID" value="NP_001382425.1"/>
</dbReference>
<dbReference type="UCSC" id="uc002adp.5">
    <molecule id="Q8N6V9-1"/>
    <property type="organism name" value="human"/>
</dbReference>
<dbReference type="AGR" id="HGNC:29585"/>
<dbReference type="CTD" id="374618"/>
<dbReference type="DisGeNET" id="374618"/>
<dbReference type="GeneCards" id="TEX9"/>
<dbReference type="HGNC" id="HGNC:29585">
    <property type="gene designation" value="TEX9"/>
</dbReference>
<dbReference type="HPA" id="ENSG00000151575">
    <property type="expression patterns" value="Low tissue specificity"/>
</dbReference>
<dbReference type="MalaCards" id="TEX9"/>
<dbReference type="MIM" id="620935">
    <property type="type" value="gene"/>
</dbReference>
<dbReference type="neXtProt" id="NX_Q8N6V9"/>
<dbReference type="OpenTargets" id="ENSG00000151575"/>
<dbReference type="PharmGKB" id="PA142670821"/>
<dbReference type="VEuPathDB" id="HostDB:ENSG00000151575"/>
<dbReference type="eggNOG" id="ENOG502QPKV">
    <property type="taxonomic scope" value="Eukaryota"/>
</dbReference>
<dbReference type="GeneTree" id="ENSGT00390000018333"/>
<dbReference type="HOGENOM" id="CLU_059201_0_0_1"/>
<dbReference type="InParanoid" id="Q8N6V9"/>
<dbReference type="OMA" id="QISCEYY"/>
<dbReference type="OrthoDB" id="269872at2759"/>
<dbReference type="PAN-GO" id="Q8N6V9">
    <property type="GO annotations" value="0 GO annotations based on evolutionary models"/>
</dbReference>
<dbReference type="PhylomeDB" id="Q8N6V9"/>
<dbReference type="TreeFam" id="TF327209"/>
<dbReference type="PathwayCommons" id="Q8N6V9"/>
<dbReference type="SignaLink" id="Q8N6V9"/>
<dbReference type="BioGRID-ORCS" id="374618">
    <property type="hits" value="18 hits in 1154 CRISPR screens"/>
</dbReference>
<dbReference type="ChiTaRS" id="TEX9">
    <property type="organism name" value="human"/>
</dbReference>
<dbReference type="GenomeRNAi" id="374618"/>
<dbReference type="Pharos" id="Q8N6V9">
    <property type="development level" value="Tdark"/>
</dbReference>
<dbReference type="PRO" id="PR:Q8N6V9"/>
<dbReference type="Proteomes" id="UP000005640">
    <property type="component" value="Chromosome 15"/>
</dbReference>
<dbReference type="RNAct" id="Q8N6V9">
    <property type="molecule type" value="protein"/>
</dbReference>
<dbReference type="Bgee" id="ENSG00000151575">
    <property type="expression patterns" value="Expressed in calcaneal tendon and 125 other cell types or tissues"/>
</dbReference>
<dbReference type="ExpressionAtlas" id="Q8N6V9">
    <property type="expression patterns" value="baseline and differential"/>
</dbReference>
<dbReference type="GO" id="GO:0034451">
    <property type="term" value="C:centriolar satellite"/>
    <property type="evidence" value="ECO:0000314"/>
    <property type="project" value="UniProtKB"/>
</dbReference>
<dbReference type="GO" id="GO:0005737">
    <property type="term" value="C:cytoplasm"/>
    <property type="evidence" value="ECO:0007669"/>
    <property type="project" value="UniProtKB-KW"/>
</dbReference>
<dbReference type="Gene3D" id="1.10.287.1490">
    <property type="match status" value="1"/>
</dbReference>
<dbReference type="PANTHER" id="PTHR23313:SF0">
    <property type="entry name" value="TESTIS-EXPRESSED PROTEIN 9"/>
    <property type="match status" value="1"/>
</dbReference>
<dbReference type="PANTHER" id="PTHR23313">
    <property type="entry name" value="TSEC1-RELATED"/>
    <property type="match status" value="1"/>
</dbReference>
<dbReference type="SUPFAM" id="SSF57997">
    <property type="entry name" value="Tropomyosin"/>
    <property type="match status" value="1"/>
</dbReference>
<organism>
    <name type="scientific">Homo sapiens</name>
    <name type="common">Human</name>
    <dbReference type="NCBI Taxonomy" id="9606"/>
    <lineage>
        <taxon>Eukaryota</taxon>
        <taxon>Metazoa</taxon>
        <taxon>Chordata</taxon>
        <taxon>Craniata</taxon>
        <taxon>Vertebrata</taxon>
        <taxon>Euteleostomi</taxon>
        <taxon>Mammalia</taxon>
        <taxon>Eutheria</taxon>
        <taxon>Euarchontoglires</taxon>
        <taxon>Primates</taxon>
        <taxon>Haplorrhini</taxon>
        <taxon>Catarrhini</taxon>
        <taxon>Hominidae</taxon>
        <taxon>Homo</taxon>
    </lineage>
</organism>
<feature type="chain" id="PRO_0000244481" description="Testis-expressed protein 9">
    <location>
        <begin position="1"/>
        <end position="391"/>
    </location>
</feature>
<feature type="region of interest" description="Disordered" evidence="2">
    <location>
        <begin position="1"/>
        <end position="31"/>
    </location>
</feature>
<feature type="region of interest" description="Disordered" evidence="2">
    <location>
        <begin position="65"/>
        <end position="85"/>
    </location>
</feature>
<feature type="coiled-coil region" evidence="1">
    <location>
        <begin position="188"/>
        <end position="351"/>
    </location>
</feature>
<feature type="splice variant" id="VSP_055381" description="In isoform 2." evidence="4">
    <location>
        <begin position="1"/>
        <end position="75"/>
    </location>
</feature>
<comment type="interaction">
    <interactant intactId="EBI-746341">
        <id>Q8N6V9</id>
    </interactant>
    <interactant intactId="EBI-745040">
        <id>Q8NEF3</id>
        <label>CCDC112</label>
    </interactant>
    <organismsDiffer>false</organismsDiffer>
    <experiments>3</experiments>
</comment>
<comment type="interaction">
    <interactant intactId="EBI-746341">
        <id>Q8N6V9</id>
    </interactant>
    <interactant intactId="EBI-10175300">
        <id>Q8TD31-3</id>
        <label>CCHCR1</label>
    </interactant>
    <organismsDiffer>false</organismsDiffer>
    <experiments>3</experiments>
</comment>
<comment type="interaction">
    <interactant intactId="EBI-746341">
        <id>Q8N6V9</id>
    </interactant>
    <interactant intactId="EBI-618309">
        <id>Q08379</id>
        <label>GOLGA2</label>
    </interactant>
    <organismsDiffer>false</organismsDiffer>
    <experiments>3</experiments>
</comment>
<comment type="interaction">
    <interactant intactId="EBI-746341">
        <id>Q8N6V9</id>
    </interactant>
    <interactant intactId="EBI-13328621">
        <id>Q7RTV2</id>
        <label>GSTA5</label>
    </interactant>
    <organismsDiffer>false</organismsDiffer>
    <experiments>3</experiments>
</comment>
<comment type="interaction">
    <interactant intactId="EBI-746341">
        <id>Q8N6V9</id>
    </interactant>
    <interactant intactId="EBI-710124">
        <id>O60341</id>
        <label>KDM1A</label>
    </interactant>
    <organismsDiffer>false</organismsDiffer>
    <experiments>4</experiments>
</comment>
<comment type="interaction">
    <interactant intactId="EBI-746341">
        <id>Q8N6V9</id>
    </interactant>
    <interactant intactId="EBI-10190763">
        <id>O94818-2</id>
        <label>NOL4</label>
    </interactant>
    <organismsDiffer>false</organismsDiffer>
    <experiments>6</experiments>
</comment>
<comment type="interaction">
    <interactant intactId="EBI-746341">
        <id>Q8N6V9</id>
    </interactant>
    <interactant intactId="EBI-398874">
        <id>Q9UBU9</id>
        <label>NXF1</label>
    </interactant>
    <organismsDiffer>false</organismsDiffer>
    <experiments>3</experiments>
</comment>
<comment type="interaction">
    <interactant intactId="EBI-746341">
        <id>Q8N6V9</id>
    </interactant>
    <interactant intactId="EBI-1105153">
        <id>Q96KQ4</id>
        <label>PPP1R13B</label>
    </interactant>
    <organismsDiffer>false</organismsDiffer>
    <experiments>3</experiments>
</comment>
<comment type="interaction">
    <interactant intactId="EBI-746341">
        <id>Q8N6V9</id>
    </interactant>
    <interactant intactId="EBI-707554">
        <id>O14530</id>
        <label>TXNDC9</label>
    </interactant>
    <organismsDiffer>false</organismsDiffer>
    <experiments>3</experiments>
</comment>
<comment type="subcellular location">
    <subcellularLocation>
        <location evidence="3">Cytoplasm</location>
        <location evidence="3">Cytoskeleton</location>
        <location evidence="3">Microtubule organizing center</location>
        <location evidence="3">Centrosome</location>
        <location evidence="3">Centriolar satellite</location>
    </subcellularLocation>
</comment>
<comment type="alternative products">
    <event type="alternative splicing"/>
    <isoform>
        <id>Q8N6V9-1</id>
        <name>1</name>
        <sequence type="displayed"/>
    </isoform>
    <isoform>
        <id>Q8N6V9-2</id>
        <name>2</name>
        <sequence type="described" ref="VSP_055381"/>
    </isoform>
</comment>
<proteinExistence type="evidence at protein level"/>
<evidence type="ECO:0000255" key="1"/>
<evidence type="ECO:0000256" key="2">
    <source>
        <dbReference type="SAM" id="MobiDB-lite"/>
    </source>
</evidence>
<evidence type="ECO:0000269" key="3">
    <source>
    </source>
</evidence>
<evidence type="ECO:0000303" key="4">
    <source>
    </source>
</evidence>
<keyword id="KW-0025">Alternative splicing</keyword>
<keyword id="KW-0175">Coiled coil</keyword>
<keyword id="KW-0963">Cytoplasm</keyword>
<keyword id="KW-0206">Cytoskeleton</keyword>
<keyword id="KW-1267">Proteomics identification</keyword>
<keyword id="KW-1185">Reference proteome</keyword>
<sequence>MAGRSLCLTRSSVPGTPFPPPVQQPSTPGPDLLALEEEYKRLNAELQAKTADVVQQAKEIIRDRQEVRSRPVSTQMKSCDDEDDYSLRGLLPSEGIVHLHSETKPKTKNIDPVNKVQNKLHSANKGRKTNSSVKLKYSDVQTADDVAIPEDFSDFSLAKTISKIEGQLEEEGLPEYIDDIFSGVSNDIGTEAQIRFLKAKLHVMQEELDNVVCECNKKEDEIQNLKSQVKNFEEDFMRQQRTINMQQSQVEKYKTLFEEANKKYDGLQQQLSSVERELENKRRLQKQAASSQSATEVRLNRALEEAEKYKLELSKLRQNNKDIANEEHKKIEVLKSENKKLEKQKGELMIGFKKQLKLIDVLKRQKMHIEAAKMLSFTEEEFMKALEWGNS</sequence>
<name>TEX9_HUMAN</name>
<gene>
    <name type="primary">TEX9</name>
</gene>
<reference key="1">
    <citation type="journal article" date="2004" name="Nat. Genet.">
        <title>Complete sequencing and characterization of 21,243 full-length human cDNAs.</title>
        <authorList>
            <person name="Ota T."/>
            <person name="Suzuki Y."/>
            <person name="Nishikawa T."/>
            <person name="Otsuki T."/>
            <person name="Sugiyama T."/>
            <person name="Irie R."/>
            <person name="Wakamatsu A."/>
            <person name="Hayashi K."/>
            <person name="Sato H."/>
            <person name="Nagai K."/>
            <person name="Kimura K."/>
            <person name="Makita H."/>
            <person name="Sekine M."/>
            <person name="Obayashi M."/>
            <person name="Nishi T."/>
            <person name="Shibahara T."/>
            <person name="Tanaka T."/>
            <person name="Ishii S."/>
            <person name="Yamamoto J."/>
            <person name="Saito K."/>
            <person name="Kawai Y."/>
            <person name="Isono Y."/>
            <person name="Nakamura Y."/>
            <person name="Nagahari K."/>
            <person name="Murakami K."/>
            <person name="Yasuda T."/>
            <person name="Iwayanagi T."/>
            <person name="Wagatsuma M."/>
            <person name="Shiratori A."/>
            <person name="Sudo H."/>
            <person name="Hosoiri T."/>
            <person name="Kaku Y."/>
            <person name="Kodaira H."/>
            <person name="Kondo H."/>
            <person name="Sugawara M."/>
            <person name="Takahashi M."/>
            <person name="Kanda K."/>
            <person name="Yokoi T."/>
            <person name="Furuya T."/>
            <person name="Kikkawa E."/>
            <person name="Omura Y."/>
            <person name="Abe K."/>
            <person name="Kamihara K."/>
            <person name="Katsuta N."/>
            <person name="Sato K."/>
            <person name="Tanikawa M."/>
            <person name="Yamazaki M."/>
            <person name="Ninomiya K."/>
            <person name="Ishibashi T."/>
            <person name="Yamashita H."/>
            <person name="Murakawa K."/>
            <person name="Fujimori K."/>
            <person name="Tanai H."/>
            <person name="Kimata M."/>
            <person name="Watanabe M."/>
            <person name="Hiraoka S."/>
            <person name="Chiba Y."/>
            <person name="Ishida S."/>
            <person name="Ono Y."/>
            <person name="Takiguchi S."/>
            <person name="Watanabe S."/>
            <person name="Yosida M."/>
            <person name="Hotuta T."/>
            <person name="Kusano J."/>
            <person name="Kanehori K."/>
            <person name="Takahashi-Fujii A."/>
            <person name="Hara H."/>
            <person name="Tanase T.-O."/>
            <person name="Nomura Y."/>
            <person name="Togiya S."/>
            <person name="Komai F."/>
            <person name="Hara R."/>
            <person name="Takeuchi K."/>
            <person name="Arita M."/>
            <person name="Imose N."/>
            <person name="Musashino K."/>
            <person name="Yuuki H."/>
            <person name="Oshima A."/>
            <person name="Sasaki N."/>
            <person name="Aotsuka S."/>
            <person name="Yoshikawa Y."/>
            <person name="Matsunawa H."/>
            <person name="Ichihara T."/>
            <person name="Shiohata N."/>
            <person name="Sano S."/>
            <person name="Moriya S."/>
            <person name="Momiyama H."/>
            <person name="Satoh N."/>
            <person name="Takami S."/>
            <person name="Terashima Y."/>
            <person name="Suzuki O."/>
            <person name="Nakagawa S."/>
            <person name="Senoh A."/>
            <person name="Mizoguchi H."/>
            <person name="Goto Y."/>
            <person name="Shimizu F."/>
            <person name="Wakebe H."/>
            <person name="Hishigaki H."/>
            <person name="Watanabe T."/>
            <person name="Sugiyama A."/>
            <person name="Takemoto M."/>
            <person name="Kawakami B."/>
            <person name="Yamazaki M."/>
            <person name="Watanabe K."/>
            <person name="Kumagai A."/>
            <person name="Itakura S."/>
            <person name="Fukuzumi Y."/>
            <person name="Fujimori Y."/>
            <person name="Komiyama M."/>
            <person name="Tashiro H."/>
            <person name="Tanigami A."/>
            <person name="Fujiwara T."/>
            <person name="Ono T."/>
            <person name="Yamada K."/>
            <person name="Fujii Y."/>
            <person name="Ozaki K."/>
            <person name="Hirao M."/>
            <person name="Ohmori Y."/>
            <person name="Kawabata A."/>
            <person name="Hikiji T."/>
            <person name="Kobatake N."/>
            <person name="Inagaki H."/>
            <person name="Ikema Y."/>
            <person name="Okamoto S."/>
            <person name="Okitani R."/>
            <person name="Kawakami T."/>
            <person name="Noguchi S."/>
            <person name="Itoh T."/>
            <person name="Shigeta K."/>
            <person name="Senba T."/>
            <person name="Matsumura K."/>
            <person name="Nakajima Y."/>
            <person name="Mizuno T."/>
            <person name="Morinaga M."/>
            <person name="Sasaki M."/>
            <person name="Togashi T."/>
            <person name="Oyama M."/>
            <person name="Hata H."/>
            <person name="Watanabe M."/>
            <person name="Komatsu T."/>
            <person name="Mizushima-Sugano J."/>
            <person name="Satoh T."/>
            <person name="Shirai Y."/>
            <person name="Takahashi Y."/>
            <person name="Nakagawa K."/>
            <person name="Okumura K."/>
            <person name="Nagase T."/>
            <person name="Nomura N."/>
            <person name="Kikuchi H."/>
            <person name="Masuho Y."/>
            <person name="Yamashita R."/>
            <person name="Nakai K."/>
            <person name="Yada T."/>
            <person name="Nakamura Y."/>
            <person name="Ohara O."/>
            <person name="Isogai T."/>
            <person name="Sugano S."/>
        </authorList>
    </citation>
    <scope>NUCLEOTIDE SEQUENCE [LARGE SCALE MRNA] (ISOFORM 2)</scope>
    <source>
        <tissue>Brain</tissue>
    </source>
</reference>
<reference key="2">
    <citation type="journal article" date="2006" name="Nature">
        <title>Analysis of the DNA sequence and duplication history of human chromosome 15.</title>
        <authorList>
            <person name="Zody M.C."/>
            <person name="Garber M."/>
            <person name="Sharpe T."/>
            <person name="Young S.K."/>
            <person name="Rowen L."/>
            <person name="O'Neill K."/>
            <person name="Whittaker C.A."/>
            <person name="Kamal M."/>
            <person name="Chang J.L."/>
            <person name="Cuomo C.A."/>
            <person name="Dewar K."/>
            <person name="FitzGerald M.G."/>
            <person name="Kodira C.D."/>
            <person name="Madan A."/>
            <person name="Qin S."/>
            <person name="Yang X."/>
            <person name="Abbasi N."/>
            <person name="Abouelleil A."/>
            <person name="Arachchi H.M."/>
            <person name="Baradarani L."/>
            <person name="Birditt B."/>
            <person name="Bloom S."/>
            <person name="Bloom T."/>
            <person name="Borowsky M.L."/>
            <person name="Burke J."/>
            <person name="Butler J."/>
            <person name="Cook A."/>
            <person name="DeArellano K."/>
            <person name="DeCaprio D."/>
            <person name="Dorris L. III"/>
            <person name="Dors M."/>
            <person name="Eichler E.E."/>
            <person name="Engels R."/>
            <person name="Fahey J."/>
            <person name="Fleetwood P."/>
            <person name="Friedman C."/>
            <person name="Gearin G."/>
            <person name="Hall J.L."/>
            <person name="Hensley G."/>
            <person name="Johnson E."/>
            <person name="Jones C."/>
            <person name="Kamat A."/>
            <person name="Kaur A."/>
            <person name="Locke D.P."/>
            <person name="Madan A."/>
            <person name="Munson G."/>
            <person name="Jaffe D.B."/>
            <person name="Lui A."/>
            <person name="Macdonald P."/>
            <person name="Mauceli E."/>
            <person name="Naylor J.W."/>
            <person name="Nesbitt R."/>
            <person name="Nicol R."/>
            <person name="O'Leary S.B."/>
            <person name="Ratcliffe A."/>
            <person name="Rounsley S."/>
            <person name="She X."/>
            <person name="Sneddon K.M.B."/>
            <person name="Stewart S."/>
            <person name="Sougnez C."/>
            <person name="Stone S.M."/>
            <person name="Topham K."/>
            <person name="Vincent D."/>
            <person name="Wang S."/>
            <person name="Zimmer A.R."/>
            <person name="Birren B.W."/>
            <person name="Hood L."/>
            <person name="Lander E.S."/>
            <person name="Nusbaum C."/>
        </authorList>
    </citation>
    <scope>NUCLEOTIDE SEQUENCE [LARGE SCALE GENOMIC DNA]</scope>
</reference>
<reference key="3">
    <citation type="submission" date="2005-07" db="EMBL/GenBank/DDBJ databases">
        <authorList>
            <person name="Mural R.J."/>
            <person name="Istrail S."/>
            <person name="Sutton G."/>
            <person name="Florea L."/>
            <person name="Halpern A.L."/>
            <person name="Mobarry C.M."/>
            <person name="Lippert R."/>
            <person name="Walenz B."/>
            <person name="Shatkay H."/>
            <person name="Dew I."/>
            <person name="Miller J.R."/>
            <person name="Flanigan M.J."/>
            <person name="Edwards N.J."/>
            <person name="Bolanos R."/>
            <person name="Fasulo D."/>
            <person name="Halldorsson B.V."/>
            <person name="Hannenhalli S."/>
            <person name="Turner R."/>
            <person name="Yooseph S."/>
            <person name="Lu F."/>
            <person name="Nusskern D.R."/>
            <person name="Shue B.C."/>
            <person name="Zheng X.H."/>
            <person name="Zhong F."/>
            <person name="Delcher A.L."/>
            <person name="Huson D.H."/>
            <person name="Kravitz S.A."/>
            <person name="Mouchard L."/>
            <person name="Reinert K."/>
            <person name="Remington K.A."/>
            <person name="Clark A.G."/>
            <person name="Waterman M.S."/>
            <person name="Eichler E.E."/>
            <person name="Adams M.D."/>
            <person name="Hunkapiller M.W."/>
            <person name="Myers E.W."/>
            <person name="Venter J.C."/>
        </authorList>
    </citation>
    <scope>NUCLEOTIDE SEQUENCE [LARGE SCALE GENOMIC DNA]</scope>
</reference>
<reference key="4">
    <citation type="journal article" date="2004" name="Genome Res.">
        <title>The status, quality, and expansion of the NIH full-length cDNA project: the Mammalian Gene Collection (MGC).</title>
        <authorList>
            <consortium name="The MGC Project Team"/>
        </authorList>
    </citation>
    <scope>NUCLEOTIDE SEQUENCE [LARGE SCALE MRNA] (ISOFORM 1)</scope>
    <source>
        <tissue>Brain</tissue>
    </source>
</reference>
<reference key="5">
    <citation type="journal article" date="2015" name="Cell">
        <title>A Dynamic Protein Interaction Landscape of the Human Centrosome-Cilium Interface.</title>
        <authorList>
            <person name="Gupta G.D."/>
            <person name="Coyaud E."/>
            <person name="Goncalves J."/>
            <person name="Mojarad B.A."/>
            <person name="Liu Y."/>
            <person name="Wu Q."/>
            <person name="Gheiratmand L."/>
            <person name="Comartin D."/>
            <person name="Tkach J.M."/>
            <person name="Cheung S.W."/>
            <person name="Bashkurov M."/>
            <person name="Hasegan M."/>
            <person name="Knight J.D."/>
            <person name="Lin Z.Y."/>
            <person name="Schueler M."/>
            <person name="Hildebrandt F."/>
            <person name="Moffat J."/>
            <person name="Gingras A.C."/>
            <person name="Raught B."/>
            <person name="Pelletier L."/>
        </authorList>
    </citation>
    <scope>SUBCELLULAR LOCATION</scope>
</reference>